<gene>
    <name evidence="1" type="primary">pepT</name>
    <name type="ordered locus">SPP_1013</name>
</gene>
<organism>
    <name type="scientific">Streptococcus pneumoniae (strain P1031)</name>
    <dbReference type="NCBI Taxonomy" id="488223"/>
    <lineage>
        <taxon>Bacteria</taxon>
        <taxon>Bacillati</taxon>
        <taxon>Bacillota</taxon>
        <taxon>Bacilli</taxon>
        <taxon>Lactobacillales</taxon>
        <taxon>Streptococcaceae</taxon>
        <taxon>Streptococcus</taxon>
    </lineage>
</organism>
<keyword id="KW-0031">Aminopeptidase</keyword>
<keyword id="KW-0963">Cytoplasm</keyword>
<keyword id="KW-0378">Hydrolase</keyword>
<keyword id="KW-0479">Metal-binding</keyword>
<keyword id="KW-0482">Metalloprotease</keyword>
<keyword id="KW-0645">Protease</keyword>
<keyword id="KW-0862">Zinc</keyword>
<protein>
    <recommendedName>
        <fullName evidence="1">Peptidase T</fullName>
        <ecNumber evidence="1">3.4.11.4</ecNumber>
    </recommendedName>
    <alternativeName>
        <fullName evidence="1">Aminotripeptidase</fullName>
        <shortName evidence="1">Tripeptidase</shortName>
    </alternativeName>
    <alternativeName>
        <fullName evidence="1">Tripeptide aminopeptidase</fullName>
    </alternativeName>
</protein>
<reference key="1">
    <citation type="journal article" date="2010" name="Genome Biol.">
        <title>Structure and dynamics of the pan-genome of Streptococcus pneumoniae and closely related species.</title>
        <authorList>
            <person name="Donati C."/>
            <person name="Hiller N.L."/>
            <person name="Tettelin H."/>
            <person name="Muzzi A."/>
            <person name="Croucher N.J."/>
            <person name="Angiuoli S.V."/>
            <person name="Oggioni M."/>
            <person name="Dunning Hotopp J.C."/>
            <person name="Hu F.Z."/>
            <person name="Riley D.R."/>
            <person name="Covacci A."/>
            <person name="Mitchell T.J."/>
            <person name="Bentley S.D."/>
            <person name="Kilian M."/>
            <person name="Ehrlich G.D."/>
            <person name="Rappuoli R."/>
            <person name="Moxon E.R."/>
            <person name="Masignani V."/>
        </authorList>
    </citation>
    <scope>NUCLEOTIDE SEQUENCE [LARGE SCALE GENOMIC DNA]</scope>
    <source>
        <strain>P1031</strain>
    </source>
</reference>
<evidence type="ECO:0000255" key="1">
    <source>
        <dbReference type="HAMAP-Rule" id="MF_00550"/>
    </source>
</evidence>
<comment type="function">
    <text evidence="1">Cleaves the N-terminal amino acid of tripeptides.</text>
</comment>
<comment type="catalytic activity">
    <reaction evidence="1">
        <text>Release of the N-terminal residue from a tripeptide.</text>
        <dbReference type="EC" id="3.4.11.4"/>
    </reaction>
</comment>
<comment type="cofactor">
    <cofactor evidence="1">
        <name>Zn(2+)</name>
        <dbReference type="ChEBI" id="CHEBI:29105"/>
    </cofactor>
    <text evidence="1">Binds 2 Zn(2+) ions per subunit.</text>
</comment>
<comment type="subcellular location">
    <subcellularLocation>
        <location evidence="1">Cytoplasm</location>
    </subcellularLocation>
</comment>
<comment type="similarity">
    <text evidence="1">Belongs to the peptidase M20B family.</text>
</comment>
<accession>C1CK88</accession>
<feature type="chain" id="PRO_1000200902" description="Peptidase T">
    <location>
        <begin position="1"/>
        <end position="407"/>
    </location>
</feature>
<feature type="active site" evidence="1">
    <location>
        <position position="83"/>
    </location>
</feature>
<feature type="active site" description="Proton acceptor" evidence="1">
    <location>
        <position position="176"/>
    </location>
</feature>
<feature type="binding site" evidence="1">
    <location>
        <position position="81"/>
    </location>
    <ligand>
        <name>Zn(2+)</name>
        <dbReference type="ChEBI" id="CHEBI:29105"/>
        <label>1</label>
    </ligand>
</feature>
<feature type="binding site" evidence="1">
    <location>
        <position position="142"/>
    </location>
    <ligand>
        <name>Zn(2+)</name>
        <dbReference type="ChEBI" id="CHEBI:29105"/>
        <label>1</label>
    </ligand>
</feature>
<feature type="binding site" evidence="1">
    <location>
        <position position="142"/>
    </location>
    <ligand>
        <name>Zn(2+)</name>
        <dbReference type="ChEBI" id="CHEBI:29105"/>
        <label>2</label>
    </ligand>
</feature>
<feature type="binding site" evidence="1">
    <location>
        <position position="177"/>
    </location>
    <ligand>
        <name>Zn(2+)</name>
        <dbReference type="ChEBI" id="CHEBI:29105"/>
        <label>2</label>
    </ligand>
</feature>
<feature type="binding site" evidence="1">
    <location>
        <position position="199"/>
    </location>
    <ligand>
        <name>Zn(2+)</name>
        <dbReference type="ChEBI" id="CHEBI:29105"/>
        <label>1</label>
    </ligand>
</feature>
<feature type="binding site" evidence="1">
    <location>
        <position position="381"/>
    </location>
    <ligand>
        <name>Zn(2+)</name>
        <dbReference type="ChEBI" id="CHEBI:29105"/>
        <label>2</label>
    </ligand>
</feature>
<proteinExistence type="inferred from homology"/>
<sequence length="407" mass="44779">MTYPNLLDRFLTYVKVNTRSDEHSTTTPSTQSQVDFATNVLIPEMKRVGLQNVYYLPNGFAIGTLPANDPSLTRKIGFISHMDTADFNAEGVNPQVIENYDGGVIELGNSGFKLDPADFKSLEKYPGQTLITTDGTTLLGADDKSGIAEIMTAIEYLTAHPEIKHCEIRVGFGPDEEIGVGANKFDAEDFDVDFAYTVDGGPLGELQYETFSAAGAELHFQGRNVHPGTAKGQMVNALQLAIDFHNQLPENDRPELTEGYQGFYHLMDVTGSVEEARASYIIRDFEKDAFEARKASMQSIADKMNAELGSYRVTLNLTDQYYNMKEVIEKDMTPITIAKAVMEDLGITPIIEPIRGGTDGSKISFMGIPTPNIFAGGENMHGRFEYVSLQTMERAVDTIIGIVAYKG</sequence>
<dbReference type="EC" id="3.4.11.4" evidence="1"/>
<dbReference type="EMBL" id="CP000920">
    <property type="protein sequence ID" value="ACO21279.1"/>
    <property type="molecule type" value="Genomic_DNA"/>
</dbReference>
<dbReference type="RefSeq" id="WP_000222052.1">
    <property type="nucleotide sequence ID" value="NC_012467.1"/>
</dbReference>
<dbReference type="SMR" id="C1CK88"/>
<dbReference type="MEROPS" id="M20.003"/>
<dbReference type="KEGG" id="spp:SPP_1013"/>
<dbReference type="HOGENOM" id="CLU_053676_0_0_9"/>
<dbReference type="GO" id="GO:0005829">
    <property type="term" value="C:cytosol"/>
    <property type="evidence" value="ECO:0007669"/>
    <property type="project" value="TreeGrafter"/>
</dbReference>
<dbReference type="GO" id="GO:0008237">
    <property type="term" value="F:metallopeptidase activity"/>
    <property type="evidence" value="ECO:0007669"/>
    <property type="project" value="UniProtKB-KW"/>
</dbReference>
<dbReference type="GO" id="GO:0045148">
    <property type="term" value="F:tripeptide aminopeptidase activity"/>
    <property type="evidence" value="ECO:0007669"/>
    <property type="project" value="UniProtKB-UniRule"/>
</dbReference>
<dbReference type="GO" id="GO:0008270">
    <property type="term" value="F:zinc ion binding"/>
    <property type="evidence" value="ECO:0007669"/>
    <property type="project" value="UniProtKB-UniRule"/>
</dbReference>
<dbReference type="GO" id="GO:0043171">
    <property type="term" value="P:peptide catabolic process"/>
    <property type="evidence" value="ECO:0007669"/>
    <property type="project" value="UniProtKB-UniRule"/>
</dbReference>
<dbReference type="GO" id="GO:0006508">
    <property type="term" value="P:proteolysis"/>
    <property type="evidence" value="ECO:0007669"/>
    <property type="project" value="UniProtKB-UniRule"/>
</dbReference>
<dbReference type="CDD" id="cd03892">
    <property type="entry name" value="M20_peptT"/>
    <property type="match status" value="1"/>
</dbReference>
<dbReference type="FunFam" id="3.30.70.360:FF:000002">
    <property type="entry name" value="Peptidase T"/>
    <property type="match status" value="1"/>
</dbReference>
<dbReference type="Gene3D" id="3.30.70.360">
    <property type="match status" value="1"/>
</dbReference>
<dbReference type="Gene3D" id="3.40.630.10">
    <property type="entry name" value="Zn peptidases"/>
    <property type="match status" value="1"/>
</dbReference>
<dbReference type="HAMAP" id="MF_00550">
    <property type="entry name" value="Aminopeptidase_M20"/>
    <property type="match status" value="1"/>
</dbReference>
<dbReference type="InterPro" id="IPR001261">
    <property type="entry name" value="ArgE/DapE_CS"/>
</dbReference>
<dbReference type="InterPro" id="IPR036264">
    <property type="entry name" value="Bact_exopeptidase_dim_dom"/>
</dbReference>
<dbReference type="InterPro" id="IPR002933">
    <property type="entry name" value="Peptidase_M20"/>
</dbReference>
<dbReference type="InterPro" id="IPR011650">
    <property type="entry name" value="Peptidase_M20_dimer"/>
</dbReference>
<dbReference type="InterPro" id="IPR010161">
    <property type="entry name" value="Peptidase_M20B"/>
</dbReference>
<dbReference type="NCBIfam" id="TIGR01882">
    <property type="entry name" value="peptidase-T"/>
    <property type="match status" value="1"/>
</dbReference>
<dbReference type="NCBIfam" id="NF003976">
    <property type="entry name" value="PRK05469.1"/>
    <property type="match status" value="1"/>
</dbReference>
<dbReference type="NCBIfam" id="NF009920">
    <property type="entry name" value="PRK13381.1"/>
    <property type="match status" value="1"/>
</dbReference>
<dbReference type="PANTHER" id="PTHR42994">
    <property type="entry name" value="PEPTIDASE T"/>
    <property type="match status" value="1"/>
</dbReference>
<dbReference type="PANTHER" id="PTHR42994:SF1">
    <property type="entry name" value="PEPTIDASE T"/>
    <property type="match status" value="1"/>
</dbReference>
<dbReference type="Pfam" id="PF07687">
    <property type="entry name" value="M20_dimer"/>
    <property type="match status" value="1"/>
</dbReference>
<dbReference type="Pfam" id="PF01546">
    <property type="entry name" value="Peptidase_M20"/>
    <property type="match status" value="1"/>
</dbReference>
<dbReference type="PIRSF" id="PIRSF037215">
    <property type="entry name" value="Peptidase_M20B"/>
    <property type="match status" value="1"/>
</dbReference>
<dbReference type="SUPFAM" id="SSF55031">
    <property type="entry name" value="Bacterial exopeptidase dimerisation domain"/>
    <property type="match status" value="1"/>
</dbReference>
<dbReference type="SUPFAM" id="SSF53187">
    <property type="entry name" value="Zn-dependent exopeptidases"/>
    <property type="match status" value="1"/>
</dbReference>
<dbReference type="PROSITE" id="PS00758">
    <property type="entry name" value="ARGE_DAPE_CPG2_1"/>
    <property type="match status" value="1"/>
</dbReference>
<dbReference type="PROSITE" id="PS00759">
    <property type="entry name" value="ARGE_DAPE_CPG2_2"/>
    <property type="match status" value="1"/>
</dbReference>
<name>PEPT_STRZP</name>